<organism>
    <name type="scientific">Xenopus laevis</name>
    <name type="common">African clawed frog</name>
    <dbReference type="NCBI Taxonomy" id="8355"/>
    <lineage>
        <taxon>Eukaryota</taxon>
        <taxon>Metazoa</taxon>
        <taxon>Chordata</taxon>
        <taxon>Craniata</taxon>
        <taxon>Vertebrata</taxon>
        <taxon>Euteleostomi</taxon>
        <taxon>Amphibia</taxon>
        <taxon>Batrachia</taxon>
        <taxon>Anura</taxon>
        <taxon>Pipoidea</taxon>
        <taxon>Pipidae</taxon>
        <taxon>Xenopodinae</taxon>
        <taxon>Xenopus</taxon>
        <taxon>Xenopus</taxon>
    </lineage>
</organism>
<sequence length="372" mass="40290">MTAEIQQPPSQPPAQSSPMSAATDKHGGQPSAMESASCATKTKKTNAGIRRPEKPPYSYIALIVMAIQSSPTKRLTLSEIYQFLQSRFPFFRGSYQGWKNSVRHNLSLNECFIKLPKGLGRPGKGHYWTIDPASEFMFEEGSFRRRPRGFRRKCQALKPMYSMMNGLGFNHIPDTYSFQGASGTISCPPNSLSLDSGIGMMNGHLPSNVDGMGLSGHSVSHLTANGAHSYMGSCTGASGGDYSHHDSGSPLLGGGVMDPHSVYSSPASAWAPSASTPYIKQQPLSPCNTAANPLSSSLSSHSLDQSYLHQNSHNTASELQGIPRYHSQSPSMNDRKEFVFSFNAMASSSMHSGSGSYYHQQVGYQDIKPCVM</sequence>
<protein>
    <recommendedName>
        <fullName>Forkhead box protein F1-B</fullName>
        <shortName>FoxF1-B</shortName>
        <shortName>FoxF1b</shortName>
    </recommendedName>
    <alternativeName>
        <fullName>Fork head domain-related protein 13'</fullName>
        <shortName>xFD-13'</shortName>
    </alternativeName>
</protein>
<keyword id="KW-0217">Developmental protein</keyword>
<keyword id="KW-0221">Differentiation</keyword>
<keyword id="KW-0238">DNA-binding</keyword>
<keyword id="KW-0539">Nucleus</keyword>
<keyword id="KW-1185">Reference proteome</keyword>
<keyword id="KW-0804">Transcription</keyword>
<keyword id="KW-0805">Transcription regulation</keyword>
<dbReference type="EMBL" id="AJ242679">
    <property type="protein sequence ID" value="CAB44731.1"/>
    <property type="molecule type" value="Genomic_DNA"/>
</dbReference>
<dbReference type="EMBL" id="BC108567">
    <property type="protein sequence ID" value="AAI08568.1"/>
    <property type="status" value="ALT_INIT"/>
    <property type="molecule type" value="mRNA"/>
</dbReference>
<dbReference type="RefSeq" id="NP_001090140.1">
    <property type="nucleotide sequence ID" value="NM_001096671.1"/>
</dbReference>
<dbReference type="SMR" id="Q9W707"/>
<dbReference type="DNASU" id="735218"/>
<dbReference type="GeneID" id="735218"/>
<dbReference type="KEGG" id="xla:735218"/>
<dbReference type="AGR" id="Xenbase:XB-GENE-6254084"/>
<dbReference type="CTD" id="735218"/>
<dbReference type="Xenbase" id="XB-GENE-6254084">
    <property type="gene designation" value="foxf1.S"/>
</dbReference>
<dbReference type="OMA" id="MGICTES"/>
<dbReference type="OrthoDB" id="5954824at2759"/>
<dbReference type="Proteomes" id="UP000186698">
    <property type="component" value="Chromosome 4S"/>
</dbReference>
<dbReference type="Bgee" id="735218">
    <property type="expression patterns" value="Expressed in lung and 7 other cell types or tissues"/>
</dbReference>
<dbReference type="GO" id="GO:0005634">
    <property type="term" value="C:nucleus"/>
    <property type="evidence" value="ECO:0000318"/>
    <property type="project" value="GO_Central"/>
</dbReference>
<dbReference type="GO" id="GO:0003677">
    <property type="term" value="F:DNA binding"/>
    <property type="evidence" value="ECO:0000250"/>
    <property type="project" value="UniProtKB"/>
</dbReference>
<dbReference type="GO" id="GO:0003700">
    <property type="term" value="F:DNA-binding transcription factor activity"/>
    <property type="evidence" value="ECO:0000303"/>
    <property type="project" value="UniProtKB"/>
</dbReference>
<dbReference type="GO" id="GO:0000981">
    <property type="term" value="F:DNA-binding transcription factor activity, RNA polymerase II-specific"/>
    <property type="evidence" value="ECO:0000318"/>
    <property type="project" value="GO_Central"/>
</dbReference>
<dbReference type="GO" id="GO:0000978">
    <property type="term" value="F:RNA polymerase II cis-regulatory region sequence-specific DNA binding"/>
    <property type="evidence" value="ECO:0000318"/>
    <property type="project" value="GO_Central"/>
</dbReference>
<dbReference type="GO" id="GO:0009887">
    <property type="term" value="P:animal organ morphogenesis"/>
    <property type="evidence" value="ECO:0000318"/>
    <property type="project" value="GO_Central"/>
</dbReference>
<dbReference type="GO" id="GO:0030509">
    <property type="term" value="P:BMP signaling pathway"/>
    <property type="evidence" value="ECO:0000315"/>
    <property type="project" value="UniProtKB"/>
</dbReference>
<dbReference type="GO" id="GO:0030154">
    <property type="term" value="P:cell differentiation"/>
    <property type="evidence" value="ECO:0007669"/>
    <property type="project" value="UniProtKB-KW"/>
</dbReference>
<dbReference type="GO" id="GO:0048566">
    <property type="term" value="P:embryonic digestive tract development"/>
    <property type="evidence" value="ECO:0000315"/>
    <property type="project" value="UniProtKB"/>
</dbReference>
<dbReference type="GO" id="GO:0045893">
    <property type="term" value="P:positive regulation of DNA-templated transcription"/>
    <property type="evidence" value="ECO:0000250"/>
    <property type="project" value="UniProtKB"/>
</dbReference>
<dbReference type="GO" id="GO:0006355">
    <property type="term" value="P:regulation of DNA-templated transcription"/>
    <property type="evidence" value="ECO:0000303"/>
    <property type="project" value="UniProtKB"/>
</dbReference>
<dbReference type="GO" id="GO:0006357">
    <property type="term" value="P:regulation of transcription by RNA polymerase II"/>
    <property type="evidence" value="ECO:0000318"/>
    <property type="project" value="GO_Central"/>
</dbReference>
<dbReference type="GO" id="GO:0048745">
    <property type="term" value="P:smooth muscle tissue development"/>
    <property type="evidence" value="ECO:0000315"/>
    <property type="project" value="UniProtKB"/>
</dbReference>
<dbReference type="CDD" id="cd20049">
    <property type="entry name" value="FH_FOXF1"/>
    <property type="match status" value="1"/>
</dbReference>
<dbReference type="FunFam" id="1.10.10.10:FF:000071">
    <property type="entry name" value="Forkhead box F1"/>
    <property type="match status" value="1"/>
</dbReference>
<dbReference type="Gene3D" id="1.10.10.10">
    <property type="entry name" value="Winged helix-like DNA-binding domain superfamily/Winged helix DNA-binding domain"/>
    <property type="match status" value="1"/>
</dbReference>
<dbReference type="InterPro" id="IPR001766">
    <property type="entry name" value="Fork_head_dom"/>
</dbReference>
<dbReference type="InterPro" id="IPR051770">
    <property type="entry name" value="Forkhead_box_regulator"/>
</dbReference>
<dbReference type="InterPro" id="IPR018122">
    <property type="entry name" value="TF_fork_head_CS_1"/>
</dbReference>
<dbReference type="InterPro" id="IPR030456">
    <property type="entry name" value="TF_fork_head_CS_2"/>
</dbReference>
<dbReference type="InterPro" id="IPR036388">
    <property type="entry name" value="WH-like_DNA-bd_sf"/>
</dbReference>
<dbReference type="InterPro" id="IPR036390">
    <property type="entry name" value="WH_DNA-bd_sf"/>
</dbReference>
<dbReference type="PANTHER" id="PTHR46262">
    <property type="entry name" value="FORKHEAD BOX PROTEIN BINIOU"/>
    <property type="match status" value="1"/>
</dbReference>
<dbReference type="PANTHER" id="PTHR46262:SF1">
    <property type="entry name" value="FORKHEAD BOX PROTEIN F1"/>
    <property type="match status" value="1"/>
</dbReference>
<dbReference type="Pfam" id="PF00250">
    <property type="entry name" value="Forkhead"/>
    <property type="match status" value="1"/>
</dbReference>
<dbReference type="PRINTS" id="PR00053">
    <property type="entry name" value="FORKHEAD"/>
</dbReference>
<dbReference type="SMART" id="SM00339">
    <property type="entry name" value="FH"/>
    <property type="match status" value="1"/>
</dbReference>
<dbReference type="SUPFAM" id="SSF46785">
    <property type="entry name" value="Winged helix' DNA-binding domain"/>
    <property type="match status" value="1"/>
</dbReference>
<dbReference type="PROSITE" id="PS00657">
    <property type="entry name" value="FORK_HEAD_1"/>
    <property type="match status" value="1"/>
</dbReference>
<dbReference type="PROSITE" id="PS00658">
    <property type="entry name" value="FORK_HEAD_2"/>
    <property type="match status" value="1"/>
</dbReference>
<dbReference type="PROSITE" id="PS50039">
    <property type="entry name" value="FORK_HEAD_3"/>
    <property type="match status" value="1"/>
</dbReference>
<accession>Q9W707</accession>
<accession>Q32NL9</accession>
<evidence type="ECO:0000255" key="1"/>
<evidence type="ECO:0000255" key="2">
    <source>
        <dbReference type="PROSITE-ProRule" id="PRU00089"/>
    </source>
</evidence>
<evidence type="ECO:0000256" key="3">
    <source>
        <dbReference type="SAM" id="MobiDB-lite"/>
    </source>
</evidence>
<evidence type="ECO:0000269" key="4">
    <source>
    </source>
</evidence>
<evidence type="ECO:0000269" key="5">
    <source>
    </source>
</evidence>
<evidence type="ECO:0000269" key="6">
    <source>
    </source>
</evidence>
<evidence type="ECO:0000269" key="7">
    <source>
    </source>
</evidence>
<evidence type="ECO:0000305" key="8"/>
<evidence type="ECO:0000312" key="9">
    <source>
        <dbReference type="EMBL" id="AAI08568.1"/>
    </source>
</evidence>
<evidence type="ECO:0000312" key="10">
    <source>
        <dbReference type="EMBL" id="CAB44731.1"/>
    </source>
</evidence>
<gene>
    <name type="primary">foxf1-b</name>
</gene>
<feature type="chain" id="PRO_0000259401" description="Forkhead box protein F1-B">
    <location>
        <begin position="1"/>
        <end position="372"/>
    </location>
</feature>
<feature type="DNA-binding region" description="Fork-head" evidence="2">
    <location>
        <begin position="54"/>
        <end position="148"/>
    </location>
</feature>
<feature type="region of interest" description="Disordered" evidence="3">
    <location>
        <begin position="1"/>
        <end position="51"/>
    </location>
</feature>
<feature type="compositionally biased region" description="Low complexity" evidence="3">
    <location>
        <begin position="13"/>
        <end position="22"/>
    </location>
</feature>
<comment type="function">
    <text evidence="6 7">Probable transcription factor. Required for smooth muscle (visceral mesoderm) differentiation during gut development. Also required for normal proliferation of the lateral plate mesoderm. Acts as a downstream mediator of bmp4-signaling.</text>
</comment>
<comment type="subcellular location">
    <subcellularLocation>
        <location evidence="1 8">Nucleus</location>
    </subcellularLocation>
</comment>
<comment type="tissue specificity">
    <text evidence="4 5 6">At the late gastrula stage, expressed in the presumptive ventrolateral mesoderm. During neurulation and tailbud stages, expressed in the lateral plate mesoderm and in the neural crest-derived structures of the head and branchial arches. During tailbud stages, expressed in the pronephros and pronephros ducts and in cells that migrate from the dorsolateral plate to the ventral region of the embryo (with the notable exception of the heart). These cells may represent hematopoietic or endothelial progenitor cells.</text>
</comment>
<comment type="developmental stage">
    <text evidence="4 5">Expression begins at late gastrula/early neurula stage and increases towards the end of embryogenesis.</text>
</comment>
<comment type="induction">
    <text evidence="5 6">By bmp4, probably acting indirectly via t/bra. Also induced to a lower extent by fgf and activin.</text>
</comment>
<comment type="sequence caution" evidence="8">
    <conflict type="erroneous initiation">
        <sequence resource="EMBL-CDS" id="AAI08568"/>
    </conflict>
</comment>
<name>FXF1B_XENLA</name>
<reference evidence="8 10" key="1">
    <citation type="journal article" date="1999" name="Mech. Dev.">
        <title>Genomic structure and embryonic expression of the Xenopus winged helix factors XFD-13/13'.</title>
        <authorList>
            <person name="Koester M."/>
            <person name="Dillinger K."/>
            <person name="Knoechel W."/>
        </authorList>
    </citation>
    <scope>NUCLEOTIDE SEQUENCE [GENOMIC DNA / MRNA]</scope>
    <scope>TISSUE SPECIFICITY</scope>
    <scope>DEVELOPMENTAL STAGE</scope>
    <source>
        <tissue evidence="4">Tail bud</tissue>
    </source>
</reference>
<reference evidence="9" key="2">
    <citation type="submission" date="2005-11" db="EMBL/GenBank/DDBJ databases">
        <authorList>
            <consortium name="NIH - Xenopus Gene Collection (XGC) project"/>
        </authorList>
    </citation>
    <scope>NUCLEOTIDE SEQUENCE [LARGE SCALE MRNA]</scope>
    <source>
        <tissue evidence="9">Neurula</tissue>
    </source>
</reference>
<reference evidence="8" key="3">
    <citation type="journal article" date="2001" name="Int. J. Dev. Biol.">
        <title>Fox (forkhead) genes are involved in the dorso-ventral patterning of the Xenopus mesoderm.</title>
        <authorList>
            <person name="El-Hodiri H."/>
            <person name="Bhatia-Dey N."/>
            <person name="Kenyon K."/>
            <person name="Ault K."/>
            <person name="Dirksen M.-L."/>
            <person name="Jamrich M."/>
        </authorList>
    </citation>
    <scope>TISSUE SPECIFICITY</scope>
    <scope>DEVELOPMENTAL STAGE</scope>
    <scope>INDUCTION</scope>
</reference>
<reference evidence="8" key="4">
    <citation type="journal article" date="2004" name="Development">
        <title>Function and regulation of FoxF1 during Xenopus gut development.</title>
        <authorList>
            <person name="Tseng H.-T."/>
            <person name="Shah R."/>
            <person name="Jamrich M."/>
        </authorList>
    </citation>
    <scope>FUNCTION</scope>
    <scope>TISSUE SPECIFICITY</scope>
    <scope>INDUCTION</scope>
</reference>
<reference evidence="8" key="5">
    <citation type="journal article" date="2005" name="Gene">
        <title>Of fox and frogs: fox (fork head/winged helix) transcription factors in Xenopus development.</title>
        <authorList>
            <person name="Pohl B.S."/>
            <person name="Knoechel W."/>
        </authorList>
    </citation>
    <scope>REVIEW</scope>
</reference>
<proteinExistence type="evidence at transcript level"/>